<gene>
    <name type="primary">rpoZ</name>
    <name type="ordered locus">BQ2027_MB1425</name>
</gene>
<comment type="function">
    <text evidence="1">Promotes RNA polymerase assembly. Latches the N- and C-terminal regions of the beta' subunit thereby facilitating its interaction with the beta and alpha subunits (By similarity).</text>
</comment>
<comment type="catalytic activity">
    <reaction>
        <text>RNA(n) + a ribonucleoside 5'-triphosphate = RNA(n+1) + diphosphate</text>
        <dbReference type="Rhea" id="RHEA:21248"/>
        <dbReference type="Rhea" id="RHEA-COMP:14527"/>
        <dbReference type="Rhea" id="RHEA-COMP:17342"/>
        <dbReference type="ChEBI" id="CHEBI:33019"/>
        <dbReference type="ChEBI" id="CHEBI:61557"/>
        <dbReference type="ChEBI" id="CHEBI:140395"/>
        <dbReference type="EC" id="2.7.7.6"/>
    </reaction>
</comment>
<comment type="subunit">
    <text evidence="1">The RNAP catalytic core consists of 2 alpha, 1 beta, 1 beta' and 1 omega subunit. When a sigma factor is associated with the core the holoenzyme is formed, which can initiate transcription (By similarity).</text>
</comment>
<comment type="similarity">
    <text evidence="2">Belongs to the RNA polymerase subunit omega family.</text>
</comment>
<dbReference type="EC" id="2.7.7.6"/>
<dbReference type="EMBL" id="LT708304">
    <property type="protein sequence ID" value="SIU00028.1"/>
    <property type="molecule type" value="Genomic_DNA"/>
</dbReference>
<dbReference type="RefSeq" id="NP_855077.1">
    <property type="nucleotide sequence ID" value="NC_002945.3"/>
</dbReference>
<dbReference type="RefSeq" id="WP_003407248.1">
    <property type="nucleotide sequence ID" value="NC_002945.4"/>
</dbReference>
<dbReference type="SMR" id="P66722"/>
<dbReference type="GeneID" id="45425368"/>
<dbReference type="KEGG" id="mbo:BQ2027_MB1425"/>
<dbReference type="PATRIC" id="fig|233413.5.peg.1560"/>
<dbReference type="Proteomes" id="UP000001419">
    <property type="component" value="Chromosome"/>
</dbReference>
<dbReference type="GO" id="GO:0000428">
    <property type="term" value="C:DNA-directed RNA polymerase complex"/>
    <property type="evidence" value="ECO:0007669"/>
    <property type="project" value="UniProtKB-KW"/>
</dbReference>
<dbReference type="GO" id="GO:0003677">
    <property type="term" value="F:DNA binding"/>
    <property type="evidence" value="ECO:0007669"/>
    <property type="project" value="UniProtKB-UniRule"/>
</dbReference>
<dbReference type="GO" id="GO:0003899">
    <property type="term" value="F:DNA-directed RNA polymerase activity"/>
    <property type="evidence" value="ECO:0007669"/>
    <property type="project" value="UniProtKB-UniRule"/>
</dbReference>
<dbReference type="GO" id="GO:0006351">
    <property type="term" value="P:DNA-templated transcription"/>
    <property type="evidence" value="ECO:0007669"/>
    <property type="project" value="UniProtKB-UniRule"/>
</dbReference>
<dbReference type="FunFam" id="3.90.940.10:FF:000002">
    <property type="entry name" value="DNA-directed RNA polymerase subunit omega"/>
    <property type="match status" value="1"/>
</dbReference>
<dbReference type="Gene3D" id="3.90.940.10">
    <property type="match status" value="1"/>
</dbReference>
<dbReference type="HAMAP" id="MF_00366">
    <property type="entry name" value="RNApol_bact_RpoZ"/>
    <property type="match status" value="1"/>
</dbReference>
<dbReference type="InterPro" id="IPR003716">
    <property type="entry name" value="DNA-dir_RNA_pol_omega"/>
</dbReference>
<dbReference type="InterPro" id="IPR006110">
    <property type="entry name" value="Pol_omega/Rpo6/RPB6"/>
</dbReference>
<dbReference type="InterPro" id="IPR036161">
    <property type="entry name" value="RPB6/omega-like_sf"/>
</dbReference>
<dbReference type="NCBIfam" id="TIGR00690">
    <property type="entry name" value="rpoZ"/>
    <property type="match status" value="1"/>
</dbReference>
<dbReference type="PANTHER" id="PTHR34476">
    <property type="entry name" value="DNA-DIRECTED RNA POLYMERASE SUBUNIT OMEGA"/>
    <property type="match status" value="1"/>
</dbReference>
<dbReference type="PANTHER" id="PTHR34476:SF1">
    <property type="entry name" value="DNA-DIRECTED RNA POLYMERASE SUBUNIT OMEGA"/>
    <property type="match status" value="1"/>
</dbReference>
<dbReference type="Pfam" id="PF01192">
    <property type="entry name" value="RNA_pol_Rpb6"/>
    <property type="match status" value="1"/>
</dbReference>
<dbReference type="SMART" id="SM01409">
    <property type="entry name" value="RNA_pol_Rpb6"/>
    <property type="match status" value="1"/>
</dbReference>
<dbReference type="SUPFAM" id="SSF63562">
    <property type="entry name" value="RPB6/omega subunit-like"/>
    <property type="match status" value="1"/>
</dbReference>
<organism>
    <name type="scientific">Mycobacterium bovis (strain ATCC BAA-935 / AF2122/97)</name>
    <dbReference type="NCBI Taxonomy" id="233413"/>
    <lineage>
        <taxon>Bacteria</taxon>
        <taxon>Bacillati</taxon>
        <taxon>Actinomycetota</taxon>
        <taxon>Actinomycetes</taxon>
        <taxon>Mycobacteriales</taxon>
        <taxon>Mycobacteriaceae</taxon>
        <taxon>Mycobacterium</taxon>
        <taxon>Mycobacterium tuberculosis complex</taxon>
    </lineage>
</organism>
<protein>
    <recommendedName>
        <fullName>DNA-directed RNA polymerase subunit omega</fullName>
        <shortName>RNAP omega subunit</shortName>
        <ecNumber>2.7.7.6</ecNumber>
    </recommendedName>
    <alternativeName>
        <fullName>RNA polymerase omega subunit</fullName>
    </alternativeName>
    <alternativeName>
        <fullName>Transcriptase subunit omega</fullName>
    </alternativeName>
</protein>
<reference key="1">
    <citation type="journal article" date="2003" name="Proc. Natl. Acad. Sci. U.S.A.">
        <title>The complete genome sequence of Mycobacterium bovis.</title>
        <authorList>
            <person name="Garnier T."/>
            <person name="Eiglmeier K."/>
            <person name="Camus J.-C."/>
            <person name="Medina N."/>
            <person name="Mansoor H."/>
            <person name="Pryor M."/>
            <person name="Duthoy S."/>
            <person name="Grondin S."/>
            <person name="Lacroix C."/>
            <person name="Monsempe C."/>
            <person name="Simon S."/>
            <person name="Harris B."/>
            <person name="Atkin R."/>
            <person name="Doggett J."/>
            <person name="Mayes R."/>
            <person name="Keating L."/>
            <person name="Wheeler P.R."/>
            <person name="Parkhill J."/>
            <person name="Barrell B.G."/>
            <person name="Cole S.T."/>
            <person name="Gordon S.V."/>
            <person name="Hewinson R.G."/>
        </authorList>
    </citation>
    <scope>NUCLEOTIDE SEQUENCE [LARGE SCALE GENOMIC DNA]</scope>
    <source>
        <strain>ATCC BAA-935 / AF2122/97</strain>
    </source>
</reference>
<reference key="2">
    <citation type="journal article" date="2017" name="Genome Announc.">
        <title>Updated reference genome sequence and annotation of Mycobacterium bovis AF2122/97.</title>
        <authorList>
            <person name="Malone K.M."/>
            <person name="Farrell D."/>
            <person name="Stuber T.P."/>
            <person name="Schubert O.T."/>
            <person name="Aebersold R."/>
            <person name="Robbe-Austerman S."/>
            <person name="Gordon S.V."/>
        </authorList>
    </citation>
    <scope>NUCLEOTIDE SEQUENCE [LARGE SCALE GENOMIC DNA]</scope>
    <scope>GENOME REANNOTATION</scope>
    <source>
        <strain>ATCC BAA-935 / AF2122/97</strain>
    </source>
</reference>
<name>RPOZ_MYCBO</name>
<keyword id="KW-0240">DNA-directed RNA polymerase</keyword>
<keyword id="KW-0548">Nucleotidyltransferase</keyword>
<keyword id="KW-1185">Reference proteome</keyword>
<keyword id="KW-0804">Transcription</keyword>
<keyword id="KW-0808">Transferase</keyword>
<evidence type="ECO:0000250" key="1"/>
<evidence type="ECO:0000305" key="2"/>
<sequence length="110" mass="11842">MSISQSDASLAAVPAVDQFDPSSGASGGYDTPLGITNPPIDELLDRVSSKYALVIYAAKRARQINDYYNQLGEGILEYVGPLVEPGLQEKPLSIALREIHADLLEHTEGE</sequence>
<feature type="chain" id="PRO_0000128953" description="DNA-directed RNA polymerase subunit omega">
    <location>
        <begin position="1"/>
        <end position="110"/>
    </location>
</feature>
<proteinExistence type="inferred from homology"/>
<accession>P66722</accession>
<accession>A0A1R3XY85</accession>
<accession>P71660</accession>
<accession>X2BHY4</accession>